<gene>
    <name evidence="6" type="primary">MADS47</name>
    <name evidence="7" type="synonym">MDP1</name>
    <name evidence="13" type="ordered locus">Os03g0186600</name>
    <name evidence="12" type="ordered locus">LOC_Os03g08754</name>
</gene>
<keyword id="KW-0025">Alternative splicing</keyword>
<keyword id="KW-0238">DNA-binding</keyword>
<keyword id="KW-0539">Nucleus</keyword>
<keyword id="KW-1185">Reference proteome</keyword>
<keyword id="KW-0804">Transcription</keyword>
<keyword id="KW-0805">Transcription regulation</keyword>
<sequence length="250" mass="27910">MAGGGGGGGRGEGEGRAATGKRERIAIRRIDNLAARQVTFSKRRRGLFKKAEELSILCDAEVGLVVFSATGKLFQFASTSMEQIIDRYNSHSKTLQRAEPSQLDLQGEDSSTCARLKEELAETSLRLRQMRGEELHRLNVEQLQELEKSLESGLGSVLKTKSKKILDEIDGLERKRMQLIEENLRLKEQLQVSRMSRMEEMQPGPDSEIVYEEGQSSESVTNASYPRPPPDNDYSSDTSLRLGLSLFSSK</sequence>
<name>MAD47_ORYSJ</name>
<protein>
    <recommendedName>
        <fullName evidence="11">MADS-box transcription factor 47</fullName>
    </recommendedName>
    <alternativeName>
        <fullName evidence="7">MADS-domain-containing protein 1</fullName>
        <shortName evidence="7">OsMDP1</shortName>
    </alternativeName>
    <alternativeName>
        <fullName evidence="6">OsMADS47</fullName>
    </alternativeName>
</protein>
<reference key="1">
    <citation type="journal article" date="2003" name="Plant Cell Physiol.">
        <title>Systematic reverse genetic screening of T-DNA tagged genes in rice for functional genomic analyses: MADS-box genes as a test case.</title>
        <authorList>
            <person name="Lee S."/>
            <person name="Kim J."/>
            <person name="Son J.-S."/>
            <person name="Nam J."/>
            <person name="Jeong D.-H."/>
            <person name="Lee K."/>
            <person name="Jang S."/>
            <person name="Yoo J."/>
            <person name="Lee J."/>
            <person name="Lee D.-Y."/>
            <person name="Kang H.-G."/>
            <person name="An G."/>
        </authorList>
    </citation>
    <scope>NUCLEOTIDE SEQUENCE [MRNA] (ISOFORMS 1 AND 2)</scope>
</reference>
<reference key="2">
    <citation type="submission" date="2003-01" db="EMBL/GenBank/DDBJ databases">
        <title>Microarray-isolated new MADS gene from rice.</title>
        <authorList>
            <person name="Duan K."/>
        </authorList>
    </citation>
    <scope>NUCLEOTIDE SEQUENCE [MRNA] (ISOFORM 2)</scope>
</reference>
<reference key="3">
    <citation type="journal article" date="2005" name="Genome Res.">
        <title>Sequence, annotation, and analysis of synteny between rice chromosome 3 and diverged grass species.</title>
        <authorList>
            <consortium name="The rice chromosome 3 sequencing consortium"/>
            <person name="Buell C.R."/>
            <person name="Yuan Q."/>
            <person name="Ouyang S."/>
            <person name="Liu J."/>
            <person name="Zhu W."/>
            <person name="Wang A."/>
            <person name="Maiti R."/>
            <person name="Haas B."/>
            <person name="Wortman J."/>
            <person name="Pertea M."/>
            <person name="Jones K.M."/>
            <person name="Kim M."/>
            <person name="Overton L."/>
            <person name="Tsitrin T."/>
            <person name="Fadrosh D."/>
            <person name="Bera J."/>
            <person name="Weaver B."/>
            <person name="Jin S."/>
            <person name="Johri S."/>
            <person name="Reardon M."/>
            <person name="Webb K."/>
            <person name="Hill J."/>
            <person name="Moffat K."/>
            <person name="Tallon L."/>
            <person name="Van Aken S."/>
            <person name="Lewis M."/>
            <person name="Utterback T."/>
            <person name="Feldblyum T."/>
            <person name="Zismann V."/>
            <person name="Iobst S."/>
            <person name="Hsiao J."/>
            <person name="de Vazeille A.R."/>
            <person name="Salzberg S.L."/>
            <person name="White O."/>
            <person name="Fraser C.M."/>
            <person name="Yu Y."/>
            <person name="Kim H."/>
            <person name="Rambo T."/>
            <person name="Currie J."/>
            <person name="Collura K."/>
            <person name="Kernodle-Thompson S."/>
            <person name="Wei F."/>
            <person name="Kudrna K."/>
            <person name="Ammiraju J.S.S."/>
            <person name="Luo M."/>
            <person name="Goicoechea J.L."/>
            <person name="Wing R.A."/>
            <person name="Henry D."/>
            <person name="Oates R."/>
            <person name="Palmer M."/>
            <person name="Pries G."/>
            <person name="Saski C."/>
            <person name="Simmons J."/>
            <person name="Soderlund C."/>
            <person name="Nelson W."/>
            <person name="de la Bastide M."/>
            <person name="Spiegel L."/>
            <person name="Nascimento L."/>
            <person name="Huang E."/>
            <person name="Preston R."/>
            <person name="Zutavern T."/>
            <person name="Palmer L."/>
            <person name="O'Shaughnessy A."/>
            <person name="Dike S."/>
            <person name="McCombie W.R."/>
            <person name="Minx P."/>
            <person name="Cordum H."/>
            <person name="Wilson R."/>
            <person name="Jin W."/>
            <person name="Lee H.R."/>
            <person name="Jiang J."/>
            <person name="Jackson S."/>
        </authorList>
    </citation>
    <scope>NUCLEOTIDE SEQUENCE [LARGE SCALE GENOMIC DNA]</scope>
    <source>
        <strain>cv. Nipponbare</strain>
    </source>
</reference>
<reference key="4">
    <citation type="journal article" date="2005" name="Nature">
        <title>The map-based sequence of the rice genome.</title>
        <authorList>
            <consortium name="International rice genome sequencing project (IRGSP)"/>
        </authorList>
    </citation>
    <scope>NUCLEOTIDE SEQUENCE [LARGE SCALE GENOMIC DNA]</scope>
    <source>
        <strain>cv. Nipponbare</strain>
    </source>
</reference>
<reference key="5">
    <citation type="journal article" date="2008" name="Nucleic Acids Res.">
        <title>The rice annotation project database (RAP-DB): 2008 update.</title>
        <authorList>
            <consortium name="The rice annotation project (RAP)"/>
        </authorList>
    </citation>
    <scope>GENOME REANNOTATION</scope>
    <source>
        <strain>cv. Nipponbare</strain>
    </source>
</reference>
<reference key="6">
    <citation type="journal article" date="2013" name="Rice">
        <title>Improvement of the Oryza sativa Nipponbare reference genome using next generation sequence and optical map data.</title>
        <authorList>
            <person name="Kawahara Y."/>
            <person name="de la Bastide M."/>
            <person name="Hamilton J.P."/>
            <person name="Kanamori H."/>
            <person name="McCombie W.R."/>
            <person name="Ouyang S."/>
            <person name="Schwartz D.C."/>
            <person name="Tanaka T."/>
            <person name="Wu J."/>
            <person name="Zhou S."/>
            <person name="Childs K.L."/>
            <person name="Davidson R.M."/>
            <person name="Lin H."/>
            <person name="Quesada-Ocampo L."/>
            <person name="Vaillancourt B."/>
            <person name="Sakai H."/>
            <person name="Lee S.S."/>
            <person name="Kim J."/>
            <person name="Numa H."/>
            <person name="Itoh T."/>
            <person name="Buell C.R."/>
            <person name="Matsumoto T."/>
        </authorList>
    </citation>
    <scope>GENOME REANNOTATION</scope>
    <source>
        <strain>cv. Nipponbare</strain>
    </source>
</reference>
<reference key="7">
    <citation type="submission" date="2006-10" db="EMBL/GenBank/DDBJ databases">
        <title>Oryza sativa full length cDNA.</title>
        <authorList>
            <consortium name="The rice full-length cDNA consortium"/>
        </authorList>
    </citation>
    <scope>NUCLEOTIDE SEQUENCE [LARGE SCALE MRNA] (ISOFORM 2)</scope>
    <source>
        <strain>cv. Nipponbare</strain>
    </source>
</reference>
<reference key="8">
    <citation type="submission" date="2000-08" db="EMBL/GenBank/DDBJ databases">
        <title>OsMADS18, a rice MADS box gene that changes partner during plant development, promotes flowering.</title>
        <authorList>
            <person name="Masiero S."/>
            <person name="Pelucchi N."/>
            <person name="Byzova M."/>
            <person name="Sari-Gorla M."/>
            <person name="Kater M.M."/>
            <person name="Colombo L."/>
        </authorList>
    </citation>
    <scope>NUCLEOTIDE SEQUENCE [MRNA] OF 12-246 (ISOFORM 2)</scope>
    <source>
        <tissue>Leaf</tissue>
    </source>
</reference>
<reference key="9">
    <citation type="journal article" date="2004" name="Plant Physiol.">
        <title>Functional characterization of OsMADS18, a member of the AP1/SQUA subfamily of MADS box genes.</title>
        <authorList>
            <person name="Fornara F."/>
            <person name="Parenicova L."/>
            <person name="Falasca G."/>
            <person name="Pelucchi N."/>
            <person name="Masiero S."/>
            <person name="Ciannamea S."/>
            <person name="Lopez-Dee Z.P."/>
            <person name="Altamura M.M."/>
            <person name="Colombo L."/>
            <person name="Kater M.M."/>
        </authorList>
    </citation>
    <scope>INTERACTION WITH MADS18</scope>
</reference>
<reference key="10">
    <citation type="journal article" date="2005" name="Mol. Genet. Genomics">
        <title>OsMADS22, an STMADS11-like MADS-box gene of rice, is expressed in non-vegetative tissues and its ectopic expression induces spikelet meristem indeterminacy.</title>
        <authorList>
            <person name="Sentoku N."/>
            <person name="Kato H."/>
            <person name="Kitano H."/>
            <person name="Imai R."/>
        </authorList>
    </citation>
    <scope>TISSUE SPECIFICITY</scope>
</reference>
<reference key="11">
    <citation type="journal article" date="2006" name="Plant J.">
        <title>A brassinolide-suppressed rice MADS-box transcription factor, OsMDP1, has a negative regulatory role in BR signaling.</title>
        <authorList>
            <person name="Duan K."/>
            <person name="Li L."/>
            <person name="Hu P."/>
            <person name="Xu S.P."/>
            <person name="Xu Z.H."/>
            <person name="Xue H.W."/>
        </authorList>
    </citation>
    <scope>FUNCTION</scope>
    <scope>TISSUE SPECIFICITY</scope>
    <scope>INDUCTION</scope>
</reference>
<comment type="function">
    <text evidence="5">Transcription factor that modulates expressions of multiple genes involved in cell signaling and gene transcription (PubMed:16827922). Plays a negative regulatory role in brassinosteroid signaling (PubMed:16827922).</text>
</comment>
<comment type="subunit">
    <text>May interact with MADS18.</text>
</comment>
<comment type="subcellular location">
    <subcellularLocation>
        <location evidence="11">Nucleus</location>
    </subcellularLocation>
</comment>
<comment type="alternative products">
    <event type="alternative splicing"/>
    <isoform>
        <id>Q5K4R0-1</id>
        <name>1</name>
        <name>MADS47-1</name>
        <sequence type="displayed"/>
    </isoform>
    <isoform>
        <id>Q5K4R0-2</id>
        <name>2</name>
        <name>MADS47-2</name>
        <sequence type="described" ref="VSP_017786"/>
    </isoform>
</comment>
<comment type="tissue specificity">
    <text evidence="4 5">Expressed in roots, shoots and developing panicles (PubMed:15682279, PubMed:16827922). Expressed in mature stems and leaves, flowering panicles, developing seeds, and mature seeds (PubMed:16827922).</text>
</comment>
<comment type="induction">
    <text evidence="5">Induced by dark (PubMed:16827922). Down-regulated by treatments with auxin and brassinosteroid (PubMed:16827922).</text>
</comment>
<comment type="miscellaneous">
    <text evidence="5">Plants silencing MADS47 exhibit shortened primary roots, elongated coleoptiles and enhanced lamina joint inclinations (PubMed:16827922). Plants silencing MADS47 display hypersensitivity to exogenous brassinolide in terms of lamina joint inclination and coleoptile elongation (PubMed:16827922).</text>
</comment>
<comment type="miscellaneous">
    <molecule>Isoform 2</molecule>
    <text evidence="11">May be due to a competing acceptor splice site.</text>
</comment>
<comment type="sequence caution" evidence="11">
    <conflict type="frameshift">
        <sequence resource="EMBL-CDS" id="AAQ23142"/>
    </conflict>
</comment>
<comment type="sequence caution" evidence="11">
    <conflict type="frameshift">
        <sequence resource="EMBL-CDS" id="AAQ23143"/>
    </conflict>
</comment>
<comment type="sequence caution" evidence="11">
    <conflict type="frameshift">
        <sequence resource="EMBL-CDS" id="CAC29335"/>
    </conflict>
</comment>
<dbReference type="EMBL" id="AY345221">
    <property type="protein sequence ID" value="AAQ23142.1"/>
    <property type="status" value="ALT_FRAME"/>
    <property type="molecule type" value="mRNA"/>
</dbReference>
<dbReference type="EMBL" id="AY345222">
    <property type="protein sequence ID" value="AAQ23143.1"/>
    <property type="status" value="ALT_FRAME"/>
    <property type="molecule type" value="mRNA"/>
</dbReference>
<dbReference type="EMBL" id="AJ536158">
    <property type="protein sequence ID" value="CAD60176.1"/>
    <property type="molecule type" value="mRNA"/>
</dbReference>
<dbReference type="EMBL" id="DP000009">
    <property type="protein sequence ID" value="ABF94360.1"/>
    <property type="molecule type" value="Genomic_DNA"/>
</dbReference>
<dbReference type="EMBL" id="DP000009">
    <property type="protein sequence ID" value="ABF94361.1"/>
    <property type="molecule type" value="Genomic_DNA"/>
</dbReference>
<dbReference type="EMBL" id="AP008209">
    <property type="protein sequence ID" value="BAF11117.2"/>
    <property type="molecule type" value="Genomic_DNA"/>
</dbReference>
<dbReference type="EMBL" id="AP014959">
    <property type="protein sequence ID" value="BAS82679.1"/>
    <property type="molecule type" value="Genomic_DNA"/>
</dbReference>
<dbReference type="EMBL" id="AK242211">
    <property type="protein sequence ID" value="BAH01226.1"/>
    <property type="molecule type" value="mRNA"/>
</dbReference>
<dbReference type="EMBL" id="AJ293816">
    <property type="protein sequence ID" value="CAC29335.1"/>
    <property type="status" value="ALT_FRAME"/>
    <property type="molecule type" value="mRNA"/>
</dbReference>
<dbReference type="RefSeq" id="XP_015630610.1">
    <property type="nucleotide sequence ID" value="XM_015775124.1"/>
</dbReference>
<dbReference type="RefSeq" id="XP_015630611.1">
    <property type="nucleotide sequence ID" value="XM_015775125.1"/>
</dbReference>
<dbReference type="SMR" id="Q5K4R0"/>
<dbReference type="FunCoup" id="Q5K4R0">
    <property type="interactions" value="36"/>
</dbReference>
<dbReference type="IntAct" id="Q5K4R0">
    <property type="interactions" value="3"/>
</dbReference>
<dbReference type="STRING" id="39947.Q5K4R0"/>
<dbReference type="PaxDb" id="39947-Q5K4R0"/>
<dbReference type="KEGG" id="dosa:Os03g0186600"/>
<dbReference type="eggNOG" id="KOG0014">
    <property type="taxonomic scope" value="Eukaryota"/>
</dbReference>
<dbReference type="HOGENOM" id="CLU_053053_14_1_1"/>
<dbReference type="InParanoid" id="Q5K4R0"/>
<dbReference type="OMA" id="IMNEITH"/>
<dbReference type="OrthoDB" id="1898716at2759"/>
<dbReference type="Proteomes" id="UP000000763">
    <property type="component" value="Chromosome 3"/>
</dbReference>
<dbReference type="Proteomes" id="UP000059680">
    <property type="component" value="Chromosome 3"/>
</dbReference>
<dbReference type="GO" id="GO:0005634">
    <property type="term" value="C:nucleus"/>
    <property type="evidence" value="ECO:0007669"/>
    <property type="project" value="UniProtKB-SubCell"/>
</dbReference>
<dbReference type="GO" id="GO:0003700">
    <property type="term" value="F:DNA-binding transcription factor activity"/>
    <property type="evidence" value="ECO:0000250"/>
    <property type="project" value="Gramene"/>
</dbReference>
<dbReference type="GO" id="GO:0000981">
    <property type="term" value="F:DNA-binding transcription factor activity, RNA polymerase II-specific"/>
    <property type="evidence" value="ECO:0000318"/>
    <property type="project" value="GO_Central"/>
</dbReference>
<dbReference type="GO" id="GO:0046983">
    <property type="term" value="F:protein dimerization activity"/>
    <property type="evidence" value="ECO:0007669"/>
    <property type="project" value="InterPro"/>
</dbReference>
<dbReference type="GO" id="GO:0000978">
    <property type="term" value="F:RNA polymerase II cis-regulatory region sequence-specific DNA binding"/>
    <property type="evidence" value="ECO:0000318"/>
    <property type="project" value="GO_Central"/>
</dbReference>
<dbReference type="GO" id="GO:0009742">
    <property type="term" value="P:brassinosteroid mediated signaling pathway"/>
    <property type="evidence" value="ECO:0000315"/>
    <property type="project" value="Gramene"/>
</dbReference>
<dbReference type="GO" id="GO:0045944">
    <property type="term" value="P:positive regulation of transcription by RNA polymerase II"/>
    <property type="evidence" value="ECO:0007669"/>
    <property type="project" value="InterPro"/>
</dbReference>
<dbReference type="GO" id="GO:0006357">
    <property type="term" value="P:regulation of transcription by RNA polymerase II"/>
    <property type="evidence" value="ECO:0000318"/>
    <property type="project" value="GO_Central"/>
</dbReference>
<dbReference type="CDD" id="cd00265">
    <property type="entry name" value="MADS_MEF2_like"/>
    <property type="match status" value="1"/>
</dbReference>
<dbReference type="FunFam" id="3.40.1810.10:FF:000007">
    <property type="entry name" value="Transcription factor, MADS-box"/>
    <property type="match status" value="1"/>
</dbReference>
<dbReference type="Gene3D" id="3.40.1810.10">
    <property type="entry name" value="Transcription factor, MADS-box"/>
    <property type="match status" value="1"/>
</dbReference>
<dbReference type="InterPro" id="IPR050142">
    <property type="entry name" value="MADS-box/MEF2_TF"/>
</dbReference>
<dbReference type="InterPro" id="IPR033896">
    <property type="entry name" value="MEF2-like_N"/>
</dbReference>
<dbReference type="InterPro" id="IPR002487">
    <property type="entry name" value="TF_Kbox"/>
</dbReference>
<dbReference type="InterPro" id="IPR002100">
    <property type="entry name" value="TF_MADSbox"/>
</dbReference>
<dbReference type="InterPro" id="IPR036879">
    <property type="entry name" value="TF_MADSbox_sf"/>
</dbReference>
<dbReference type="PANTHER" id="PTHR48019">
    <property type="entry name" value="SERUM RESPONSE FACTOR HOMOLOG"/>
    <property type="match status" value="1"/>
</dbReference>
<dbReference type="Pfam" id="PF01486">
    <property type="entry name" value="K-box"/>
    <property type="match status" value="1"/>
</dbReference>
<dbReference type="Pfam" id="PF00319">
    <property type="entry name" value="SRF-TF"/>
    <property type="match status" value="1"/>
</dbReference>
<dbReference type="PRINTS" id="PR00404">
    <property type="entry name" value="MADSDOMAIN"/>
</dbReference>
<dbReference type="SMART" id="SM00432">
    <property type="entry name" value="MADS"/>
    <property type="match status" value="1"/>
</dbReference>
<dbReference type="SUPFAM" id="SSF55455">
    <property type="entry name" value="SRF-like"/>
    <property type="match status" value="1"/>
</dbReference>
<dbReference type="PROSITE" id="PS51297">
    <property type="entry name" value="K_BOX"/>
    <property type="match status" value="1"/>
</dbReference>
<dbReference type="PROSITE" id="PS00350">
    <property type="entry name" value="MADS_BOX_1"/>
    <property type="match status" value="1"/>
</dbReference>
<dbReference type="PROSITE" id="PS50066">
    <property type="entry name" value="MADS_BOX_2"/>
    <property type="match status" value="1"/>
</dbReference>
<accession>Q5K4R0</accession>
<accession>Q10QR6</accession>
<accession>Q10QR7</accession>
<accession>Q6VAM2</accession>
<accession>Q6VAM3</accession>
<accession>Q9AVU1</accession>
<feature type="chain" id="PRO_0000229915" description="MADS-box transcription factor 47">
    <location>
        <begin position="1"/>
        <end position="250"/>
    </location>
</feature>
<feature type="domain" description="MADS-box" evidence="1">
    <location>
        <begin position="20"/>
        <end position="80"/>
    </location>
</feature>
<feature type="domain" description="K-box" evidence="2">
    <location>
        <begin position="106"/>
        <end position="198"/>
    </location>
</feature>
<feature type="region of interest" description="Disordered" evidence="3">
    <location>
        <begin position="1"/>
        <end position="20"/>
    </location>
</feature>
<feature type="region of interest" description="Disordered" evidence="3">
    <location>
        <begin position="196"/>
        <end position="250"/>
    </location>
</feature>
<feature type="compositionally biased region" description="Gly residues" evidence="3">
    <location>
        <begin position="1"/>
        <end position="10"/>
    </location>
</feature>
<feature type="compositionally biased region" description="Basic and acidic residues" evidence="3">
    <location>
        <begin position="11"/>
        <end position="20"/>
    </location>
</feature>
<feature type="compositionally biased region" description="Polar residues" evidence="3">
    <location>
        <begin position="214"/>
        <end position="224"/>
    </location>
</feature>
<feature type="splice variant" id="VSP_017786" description="In isoform 2." evidence="6 8 9 10">
    <location>
        <begin position="190"/>
        <end position="191"/>
    </location>
</feature>
<feature type="sequence conflict" description="In Ref. 1; AAQ23142/AAQ23143 and 8; CAC29335." ref="1 8">
    <original>R</original>
    <variation>K</variation>
    <location>
        <position position="241"/>
    </location>
</feature>
<evidence type="ECO:0000255" key="1">
    <source>
        <dbReference type="PROSITE-ProRule" id="PRU00251"/>
    </source>
</evidence>
<evidence type="ECO:0000255" key="2">
    <source>
        <dbReference type="PROSITE-ProRule" id="PRU00629"/>
    </source>
</evidence>
<evidence type="ECO:0000256" key="3">
    <source>
        <dbReference type="SAM" id="MobiDB-lite"/>
    </source>
</evidence>
<evidence type="ECO:0000269" key="4">
    <source>
    </source>
</evidence>
<evidence type="ECO:0000269" key="5">
    <source>
    </source>
</evidence>
<evidence type="ECO:0000303" key="6">
    <source>
    </source>
</evidence>
<evidence type="ECO:0000303" key="7">
    <source>
    </source>
</evidence>
<evidence type="ECO:0000303" key="8">
    <source ref="2"/>
</evidence>
<evidence type="ECO:0000303" key="9">
    <source ref="7"/>
</evidence>
<evidence type="ECO:0000303" key="10">
    <source ref="8"/>
</evidence>
<evidence type="ECO:0000305" key="11"/>
<evidence type="ECO:0000312" key="12">
    <source>
        <dbReference type="EMBL" id="ABF94360.1"/>
    </source>
</evidence>
<evidence type="ECO:0000312" key="13">
    <source>
        <dbReference type="EMBL" id="BAS82679.1"/>
    </source>
</evidence>
<organism>
    <name type="scientific">Oryza sativa subsp. japonica</name>
    <name type="common">Rice</name>
    <dbReference type="NCBI Taxonomy" id="39947"/>
    <lineage>
        <taxon>Eukaryota</taxon>
        <taxon>Viridiplantae</taxon>
        <taxon>Streptophyta</taxon>
        <taxon>Embryophyta</taxon>
        <taxon>Tracheophyta</taxon>
        <taxon>Spermatophyta</taxon>
        <taxon>Magnoliopsida</taxon>
        <taxon>Liliopsida</taxon>
        <taxon>Poales</taxon>
        <taxon>Poaceae</taxon>
        <taxon>BOP clade</taxon>
        <taxon>Oryzoideae</taxon>
        <taxon>Oryzeae</taxon>
        <taxon>Oryzinae</taxon>
        <taxon>Oryza</taxon>
        <taxon>Oryza sativa</taxon>
    </lineage>
</organism>
<proteinExistence type="evidence at protein level"/>